<dbReference type="EC" id="3.1.-.-" evidence="1"/>
<dbReference type="EMBL" id="CP000817">
    <property type="protein sequence ID" value="ACA39228.1"/>
    <property type="molecule type" value="Genomic_DNA"/>
</dbReference>
<dbReference type="RefSeq" id="WP_012293332.1">
    <property type="nucleotide sequence ID" value="NC_010382.1"/>
</dbReference>
<dbReference type="SMR" id="B1HR37"/>
<dbReference type="EnsemblBacteria" id="ACA39228">
    <property type="protein sequence ID" value="ACA39228"/>
    <property type="gene ID" value="Bsph_1630"/>
</dbReference>
<dbReference type="KEGG" id="lsp:Bsph_1630"/>
<dbReference type="HOGENOM" id="CLU_028328_1_0_9"/>
<dbReference type="Proteomes" id="UP000002164">
    <property type="component" value="Chromosome"/>
</dbReference>
<dbReference type="GO" id="GO:0005886">
    <property type="term" value="C:plasma membrane"/>
    <property type="evidence" value="ECO:0007669"/>
    <property type="project" value="UniProtKB-SubCell"/>
</dbReference>
<dbReference type="GO" id="GO:0003723">
    <property type="term" value="F:RNA binding"/>
    <property type="evidence" value="ECO:0007669"/>
    <property type="project" value="UniProtKB-UniRule"/>
</dbReference>
<dbReference type="GO" id="GO:0004521">
    <property type="term" value="F:RNA endonuclease activity"/>
    <property type="evidence" value="ECO:0007669"/>
    <property type="project" value="UniProtKB-UniRule"/>
</dbReference>
<dbReference type="GO" id="GO:0006402">
    <property type="term" value="P:mRNA catabolic process"/>
    <property type="evidence" value="ECO:0007669"/>
    <property type="project" value="UniProtKB-UniRule"/>
</dbReference>
<dbReference type="CDD" id="cd00077">
    <property type="entry name" value="HDc"/>
    <property type="match status" value="1"/>
</dbReference>
<dbReference type="CDD" id="cd22431">
    <property type="entry name" value="KH-I_RNaseY"/>
    <property type="match status" value="1"/>
</dbReference>
<dbReference type="FunFam" id="1.10.3210.10:FF:000003">
    <property type="entry name" value="Ribonuclease Y"/>
    <property type="match status" value="1"/>
</dbReference>
<dbReference type="FunFam" id="3.30.1370.10:FF:000006">
    <property type="entry name" value="Ribonuclease Y"/>
    <property type="match status" value="1"/>
</dbReference>
<dbReference type="Gene3D" id="1.10.3210.10">
    <property type="entry name" value="Hypothetical protein af1432"/>
    <property type="match status" value="1"/>
</dbReference>
<dbReference type="Gene3D" id="3.30.1370.10">
    <property type="entry name" value="K Homology domain, type 1"/>
    <property type="match status" value="1"/>
</dbReference>
<dbReference type="HAMAP" id="MF_00335">
    <property type="entry name" value="RNase_Y"/>
    <property type="match status" value="1"/>
</dbReference>
<dbReference type="InterPro" id="IPR003607">
    <property type="entry name" value="HD/PDEase_dom"/>
</dbReference>
<dbReference type="InterPro" id="IPR006674">
    <property type="entry name" value="HD_domain"/>
</dbReference>
<dbReference type="InterPro" id="IPR006675">
    <property type="entry name" value="HDIG_dom"/>
</dbReference>
<dbReference type="InterPro" id="IPR004087">
    <property type="entry name" value="KH_dom"/>
</dbReference>
<dbReference type="InterPro" id="IPR004088">
    <property type="entry name" value="KH_dom_type_1"/>
</dbReference>
<dbReference type="InterPro" id="IPR036612">
    <property type="entry name" value="KH_dom_type_1_sf"/>
</dbReference>
<dbReference type="InterPro" id="IPR017705">
    <property type="entry name" value="Ribonuclease_Y"/>
</dbReference>
<dbReference type="InterPro" id="IPR022711">
    <property type="entry name" value="RNase_Y_N"/>
</dbReference>
<dbReference type="NCBIfam" id="TIGR00277">
    <property type="entry name" value="HDIG"/>
    <property type="match status" value="1"/>
</dbReference>
<dbReference type="NCBIfam" id="TIGR03319">
    <property type="entry name" value="RNase_Y"/>
    <property type="match status" value="1"/>
</dbReference>
<dbReference type="PANTHER" id="PTHR12826">
    <property type="entry name" value="RIBONUCLEASE Y"/>
    <property type="match status" value="1"/>
</dbReference>
<dbReference type="PANTHER" id="PTHR12826:SF15">
    <property type="entry name" value="RIBONUCLEASE Y"/>
    <property type="match status" value="1"/>
</dbReference>
<dbReference type="Pfam" id="PF01966">
    <property type="entry name" value="HD"/>
    <property type="match status" value="1"/>
</dbReference>
<dbReference type="Pfam" id="PF00013">
    <property type="entry name" value="KH_1"/>
    <property type="match status" value="1"/>
</dbReference>
<dbReference type="Pfam" id="PF12072">
    <property type="entry name" value="RNase_Y_N"/>
    <property type="match status" value="1"/>
</dbReference>
<dbReference type="SMART" id="SM00471">
    <property type="entry name" value="HDc"/>
    <property type="match status" value="1"/>
</dbReference>
<dbReference type="SMART" id="SM00322">
    <property type="entry name" value="KH"/>
    <property type="match status" value="1"/>
</dbReference>
<dbReference type="SUPFAM" id="SSF54791">
    <property type="entry name" value="Eukaryotic type KH-domain (KH-domain type I)"/>
    <property type="match status" value="1"/>
</dbReference>
<dbReference type="SUPFAM" id="SSF109604">
    <property type="entry name" value="HD-domain/PDEase-like"/>
    <property type="match status" value="1"/>
</dbReference>
<dbReference type="PROSITE" id="PS51831">
    <property type="entry name" value="HD"/>
    <property type="match status" value="1"/>
</dbReference>
<dbReference type="PROSITE" id="PS50084">
    <property type="entry name" value="KH_TYPE_1"/>
    <property type="match status" value="1"/>
</dbReference>
<reference key="1">
    <citation type="journal article" date="2008" name="J. Bacteriol.">
        <title>Complete genome sequence of the mosquitocidal bacterium Bacillus sphaericus C3-41 and comparison with those of closely related Bacillus species.</title>
        <authorList>
            <person name="Hu X."/>
            <person name="Fan W."/>
            <person name="Han B."/>
            <person name="Liu H."/>
            <person name="Zheng D."/>
            <person name="Li Q."/>
            <person name="Dong W."/>
            <person name="Yan J."/>
            <person name="Gao M."/>
            <person name="Berry C."/>
            <person name="Yuan Z."/>
        </authorList>
    </citation>
    <scope>NUCLEOTIDE SEQUENCE [LARGE SCALE GENOMIC DNA]</scope>
    <source>
        <strain>C3-41</strain>
    </source>
</reference>
<keyword id="KW-1003">Cell membrane</keyword>
<keyword id="KW-0255">Endonuclease</keyword>
<keyword id="KW-0378">Hydrolase</keyword>
<keyword id="KW-0472">Membrane</keyword>
<keyword id="KW-0540">Nuclease</keyword>
<keyword id="KW-0694">RNA-binding</keyword>
<keyword id="KW-0812">Transmembrane</keyword>
<keyword id="KW-1133">Transmembrane helix</keyword>
<name>RNY_LYSSC</name>
<feature type="chain" id="PRO_0000344904" description="Ribonuclease Y">
    <location>
        <begin position="1"/>
        <end position="519"/>
    </location>
</feature>
<feature type="transmembrane region" description="Helical" evidence="1">
    <location>
        <begin position="4"/>
        <end position="24"/>
    </location>
</feature>
<feature type="domain" description="KH" evidence="1">
    <location>
        <begin position="209"/>
        <end position="272"/>
    </location>
</feature>
<feature type="domain" description="HD" evidence="2">
    <location>
        <begin position="335"/>
        <end position="428"/>
    </location>
</feature>
<gene>
    <name evidence="1" type="primary">rny</name>
    <name type="ordered locus">Bsph_1630</name>
</gene>
<proteinExistence type="inferred from homology"/>
<comment type="function">
    <text evidence="1">Endoribonuclease that initiates mRNA decay.</text>
</comment>
<comment type="subcellular location">
    <subcellularLocation>
        <location evidence="1">Cell membrane</location>
        <topology evidence="1">Single-pass membrane protein</topology>
    </subcellularLocation>
</comment>
<comment type="similarity">
    <text evidence="1">Belongs to the RNase Y family.</text>
</comment>
<protein>
    <recommendedName>
        <fullName evidence="1">Ribonuclease Y</fullName>
        <shortName evidence="1">RNase Y</shortName>
        <ecNumber evidence="1">3.1.-.-</ecNumber>
    </recommendedName>
</protein>
<accession>B1HR37</accession>
<organism>
    <name type="scientific">Lysinibacillus sphaericus (strain C3-41)</name>
    <dbReference type="NCBI Taxonomy" id="444177"/>
    <lineage>
        <taxon>Bacteria</taxon>
        <taxon>Bacillati</taxon>
        <taxon>Bacillota</taxon>
        <taxon>Bacilli</taxon>
        <taxon>Bacillales</taxon>
        <taxon>Bacillaceae</taxon>
        <taxon>Lysinibacillus</taxon>
    </lineage>
</organism>
<evidence type="ECO:0000255" key="1">
    <source>
        <dbReference type="HAMAP-Rule" id="MF_00335"/>
    </source>
</evidence>
<evidence type="ECO:0000255" key="2">
    <source>
        <dbReference type="PROSITE-ProRule" id="PRU01175"/>
    </source>
</evidence>
<sequence>MDGITIISALLGLIVGAAVSYIYMKKVNDSKITGAKHVAETIVEEGKREAEALKKEALLEAKDETHKFRTEAENDIRERRLELQKQENRLLQREENLDRKDDTLNKREASLERKEQALAERQQHIEQMESKVDELVASQKTELERISALTREEAKSIILNEVEKELATDIAVMTKEAETRAKEDSDKKAREILSLALQRFAADHVAETTVSVVNLPNDEMKGRIIGREGRNIRTLETLTGIDLIIDDTPEAVILSGFDPIRRETARLALEKLVQDGRIHPARIEEMVEKSRREVDEQIRETGEQTTFEIGIHNLHPDLMKILGRMKYRTSYGQNVLKHSIEVAHLAGLLAAELGEDVALARRAGLLHDIGKAIDHEVEGSHVEIGVELATKYKEHPVVINSIASHHGDTEATSVIAVLVAAADALSAARPGARSETLENYIRRLEKLEEISESYDGVEKSYAIQAGREIRIIVQPEKIDDLASHRLARDIRKRIEEELDYPGHIKVTVIRETRAVEYAK</sequence>